<organism>
    <name type="scientific">Helicobacter pylori (strain J99 / ATCC 700824)</name>
    <name type="common">Campylobacter pylori J99</name>
    <dbReference type="NCBI Taxonomy" id="85963"/>
    <lineage>
        <taxon>Bacteria</taxon>
        <taxon>Pseudomonadati</taxon>
        <taxon>Campylobacterota</taxon>
        <taxon>Epsilonproteobacteria</taxon>
        <taxon>Campylobacterales</taxon>
        <taxon>Helicobacteraceae</taxon>
        <taxon>Helicobacter</taxon>
    </lineage>
</organism>
<keyword id="KW-0002">3D-structure</keyword>
<keyword id="KW-0049">Antioxidant</keyword>
<keyword id="KW-0963">Cytoplasm</keyword>
<keyword id="KW-0903">Direct protein sequencing</keyword>
<keyword id="KW-1015">Disulfide bond</keyword>
<keyword id="KW-0560">Oxidoreductase</keyword>
<keyword id="KW-0575">Peroxidase</keyword>
<keyword id="KW-0676">Redox-active center</keyword>
<dbReference type="EC" id="1.11.1.26" evidence="1"/>
<dbReference type="EMBL" id="AE001439">
    <property type="protein sequence ID" value="AAD07055.1"/>
    <property type="molecule type" value="Genomic_DNA"/>
</dbReference>
<dbReference type="PIR" id="H71801">
    <property type="entry name" value="H71801"/>
</dbReference>
<dbReference type="RefSeq" id="WP_000961648.1">
    <property type="nucleotide sequence ID" value="NC_000921.1"/>
</dbReference>
<dbReference type="PDB" id="1ZOF">
    <property type="method" value="X-ray"/>
    <property type="resolution" value="2.95 A"/>
    <property type="chains" value="A/B/C/D/E/F/G/H/I/J=1-198"/>
</dbReference>
<dbReference type="PDBsum" id="1ZOF"/>
<dbReference type="SMR" id="P56876"/>
<dbReference type="IntAct" id="P56876">
    <property type="interactions" value="2"/>
</dbReference>
<dbReference type="KEGG" id="hpj:jhp_1471"/>
<dbReference type="PATRIC" id="fig|85963.30.peg.1071"/>
<dbReference type="eggNOG" id="COG0450">
    <property type="taxonomic scope" value="Bacteria"/>
</dbReference>
<dbReference type="EvolutionaryTrace" id="P56876"/>
<dbReference type="Proteomes" id="UP000000804">
    <property type="component" value="Chromosome"/>
</dbReference>
<dbReference type="GO" id="GO:0005829">
    <property type="term" value="C:cytosol"/>
    <property type="evidence" value="ECO:0007669"/>
    <property type="project" value="TreeGrafter"/>
</dbReference>
<dbReference type="GO" id="GO:0102039">
    <property type="term" value="F:NADH-dependent peroxiredoxin activity"/>
    <property type="evidence" value="ECO:0007669"/>
    <property type="project" value="UniProtKB-EC"/>
</dbReference>
<dbReference type="GO" id="GO:0008379">
    <property type="term" value="F:thioredoxin peroxidase activity"/>
    <property type="evidence" value="ECO:0007669"/>
    <property type="project" value="TreeGrafter"/>
</dbReference>
<dbReference type="GO" id="GO:0045454">
    <property type="term" value="P:cell redox homeostasis"/>
    <property type="evidence" value="ECO:0007669"/>
    <property type="project" value="TreeGrafter"/>
</dbReference>
<dbReference type="GO" id="GO:0033554">
    <property type="term" value="P:cellular response to stress"/>
    <property type="evidence" value="ECO:0007669"/>
    <property type="project" value="TreeGrafter"/>
</dbReference>
<dbReference type="GO" id="GO:0042744">
    <property type="term" value="P:hydrogen peroxide catabolic process"/>
    <property type="evidence" value="ECO:0007669"/>
    <property type="project" value="TreeGrafter"/>
</dbReference>
<dbReference type="GO" id="GO:0006979">
    <property type="term" value="P:response to oxidative stress"/>
    <property type="evidence" value="ECO:0007669"/>
    <property type="project" value="TreeGrafter"/>
</dbReference>
<dbReference type="CDD" id="cd03015">
    <property type="entry name" value="PRX_Typ2cys"/>
    <property type="match status" value="1"/>
</dbReference>
<dbReference type="FunFam" id="3.40.30.10:FF:000002">
    <property type="entry name" value="Alkyl hydroperoxide reductase C"/>
    <property type="match status" value="1"/>
</dbReference>
<dbReference type="Gene3D" id="3.40.30.10">
    <property type="entry name" value="Glutaredoxin"/>
    <property type="match status" value="1"/>
</dbReference>
<dbReference type="InterPro" id="IPR000866">
    <property type="entry name" value="AhpC/TSA"/>
</dbReference>
<dbReference type="InterPro" id="IPR050217">
    <property type="entry name" value="Peroxiredoxin"/>
</dbReference>
<dbReference type="InterPro" id="IPR024706">
    <property type="entry name" value="Peroxiredoxin_AhpC-typ"/>
</dbReference>
<dbReference type="InterPro" id="IPR019479">
    <property type="entry name" value="Peroxiredoxin_C"/>
</dbReference>
<dbReference type="InterPro" id="IPR036249">
    <property type="entry name" value="Thioredoxin-like_sf"/>
</dbReference>
<dbReference type="InterPro" id="IPR013766">
    <property type="entry name" value="Thioredoxin_domain"/>
</dbReference>
<dbReference type="PANTHER" id="PTHR10681">
    <property type="entry name" value="THIOREDOXIN PEROXIDASE"/>
    <property type="match status" value="1"/>
</dbReference>
<dbReference type="PANTHER" id="PTHR10681:SF128">
    <property type="entry name" value="THIOREDOXIN-DEPENDENT PEROXIDE REDUCTASE, MITOCHONDRIAL"/>
    <property type="match status" value="1"/>
</dbReference>
<dbReference type="Pfam" id="PF10417">
    <property type="entry name" value="1-cysPrx_C"/>
    <property type="match status" value="1"/>
</dbReference>
<dbReference type="Pfam" id="PF00578">
    <property type="entry name" value="AhpC-TSA"/>
    <property type="match status" value="1"/>
</dbReference>
<dbReference type="PIRSF" id="PIRSF000239">
    <property type="entry name" value="AHPC"/>
    <property type="match status" value="1"/>
</dbReference>
<dbReference type="SUPFAM" id="SSF52833">
    <property type="entry name" value="Thioredoxin-like"/>
    <property type="match status" value="1"/>
</dbReference>
<dbReference type="PROSITE" id="PS51352">
    <property type="entry name" value="THIOREDOXIN_2"/>
    <property type="match status" value="1"/>
</dbReference>
<evidence type="ECO:0000250" key="1">
    <source>
        <dbReference type="UniProtKB" id="P0A251"/>
    </source>
</evidence>
<evidence type="ECO:0000250" key="2">
    <source>
        <dbReference type="UniProtKB" id="P0AE08"/>
    </source>
</evidence>
<evidence type="ECO:0000255" key="3">
    <source>
        <dbReference type="PROSITE-ProRule" id="PRU00691"/>
    </source>
</evidence>
<evidence type="ECO:0000269" key="4">
    <source>
    </source>
</evidence>
<evidence type="ECO:0000269" key="5">
    <source>
    </source>
</evidence>
<evidence type="ECO:0000305" key="6"/>
<evidence type="ECO:0000305" key="7">
    <source>
    </source>
</evidence>
<evidence type="ECO:0007744" key="8">
    <source>
        <dbReference type="PDB" id="1ZOF"/>
    </source>
</evidence>
<evidence type="ECO:0007829" key="9">
    <source>
        <dbReference type="PDB" id="1ZOF"/>
    </source>
</evidence>
<protein>
    <recommendedName>
        <fullName>Alkyl hydroperoxide reductase C</fullName>
        <ecNumber evidence="1">1.11.1.26</ecNumber>
    </recommendedName>
    <alternativeName>
        <fullName>26 kDa antigen</fullName>
    </alternativeName>
    <alternativeName>
        <fullName>Peroxiredoxin</fullName>
    </alternativeName>
    <alternativeName>
        <fullName>Thioredoxin peroxidase</fullName>
    </alternativeName>
</protein>
<name>AHPC_HELPJ</name>
<feature type="chain" id="PRO_0000135145" description="Alkyl hydroperoxide reductase C">
    <location>
        <begin position="1"/>
        <end position="198"/>
    </location>
</feature>
<feature type="domain" description="Thioredoxin" evidence="3">
    <location>
        <begin position="2"/>
        <end position="161"/>
    </location>
</feature>
<feature type="active site" description="Cysteine sulfenic acid (-SOH) intermediate" evidence="7">
    <location>
        <position position="49"/>
    </location>
</feature>
<feature type="disulfide bond" description="Interchain (with C-169)" evidence="5 8">
    <location>
        <position position="49"/>
    </location>
</feature>
<feature type="disulfide bond" description="Interchain (with C-49)" evidence="5 8">
    <location>
        <position position="169"/>
    </location>
</feature>
<feature type="strand" evidence="9">
    <location>
        <begin position="11"/>
        <end position="15"/>
    </location>
</feature>
<feature type="strand" evidence="9">
    <location>
        <begin position="21"/>
        <end position="26"/>
    </location>
</feature>
<feature type="turn" evidence="9">
    <location>
        <begin position="27"/>
        <end position="29"/>
    </location>
</feature>
<feature type="strand" evidence="9">
    <location>
        <begin position="33"/>
        <end position="40"/>
    </location>
</feature>
<feature type="helix" evidence="9">
    <location>
        <begin position="52"/>
        <end position="58"/>
    </location>
</feature>
<feature type="helix" evidence="9">
    <location>
        <begin position="60"/>
        <end position="65"/>
    </location>
</feature>
<feature type="strand" evidence="9">
    <location>
        <begin position="69"/>
        <end position="76"/>
    </location>
</feature>
<feature type="helix" evidence="9">
    <location>
        <begin position="78"/>
        <end position="85"/>
    </location>
</feature>
<feature type="helix" evidence="9">
    <location>
        <begin position="89"/>
        <end position="91"/>
    </location>
</feature>
<feature type="strand" evidence="9">
    <location>
        <begin position="101"/>
        <end position="103"/>
    </location>
</feature>
<feature type="helix" evidence="9">
    <location>
        <begin position="108"/>
        <end position="112"/>
    </location>
</feature>
<feature type="turn" evidence="9">
    <location>
        <begin position="118"/>
        <end position="120"/>
    </location>
</feature>
<feature type="strand" evidence="9">
    <location>
        <begin position="124"/>
        <end position="130"/>
    </location>
</feature>
<feature type="turn" evidence="9">
    <location>
        <begin position="131"/>
        <end position="133"/>
    </location>
</feature>
<feature type="strand" evidence="9">
    <location>
        <begin position="134"/>
        <end position="144"/>
    </location>
</feature>
<feature type="helix" evidence="9">
    <location>
        <begin position="148"/>
        <end position="163"/>
    </location>
</feature>
<proteinExistence type="evidence at protein level"/>
<gene>
    <name type="primary">ahpC</name>
    <name type="synonym">tsaA</name>
    <name type="ordered locus">jhp_1471</name>
</gene>
<reference key="1">
    <citation type="journal article" date="1999" name="Nature">
        <title>Genomic sequence comparison of two unrelated isolates of the human gastric pathogen Helicobacter pylori.</title>
        <authorList>
            <person name="Alm R.A."/>
            <person name="Ling L.-S.L."/>
            <person name="Moir D.T."/>
            <person name="King B.L."/>
            <person name="Brown E.D."/>
            <person name="Doig P.C."/>
            <person name="Smith D.R."/>
            <person name="Noonan B."/>
            <person name="Guild B.C."/>
            <person name="deJonge B.L."/>
            <person name="Carmel G."/>
            <person name="Tummino P.J."/>
            <person name="Caruso A."/>
            <person name="Uria-Nickelsen M."/>
            <person name="Mills D.M."/>
            <person name="Ives C."/>
            <person name="Gibson R."/>
            <person name="Merberg D."/>
            <person name="Mills S.D."/>
            <person name="Jiang Q."/>
            <person name="Taylor D.E."/>
            <person name="Vovis G.F."/>
            <person name="Trust T.J."/>
        </authorList>
    </citation>
    <scope>NUCLEOTIDE SEQUENCE [LARGE SCALE GENOMIC DNA]</scope>
    <source>
        <strain>J99 / ATCC 700824</strain>
    </source>
</reference>
<reference key="2">
    <citation type="journal article" date="1991" name="J. Bacteriol.">
        <title>Isolation and biochemical and molecular analyses of a species-specific protein antigen from the gastric pathogen Helicobacter pylori.</title>
        <authorList>
            <person name="O'Toole P.W."/>
            <person name="Logan S.M."/>
            <person name="Kostrzynska M."/>
            <person name="Wadstrom T."/>
            <person name="Trust T.J."/>
        </authorList>
    </citation>
    <scope>NUCLEOTIDE SEQUENCE [GENOMIC DNA]</scope>
    <scope>PARTIAL PROTEIN SEQUENCE</scope>
    <source>
        <strain>915</strain>
    </source>
</reference>
<reference key="3">
    <citation type="journal article" date="2001" name="J. Bacteriol.">
        <title>Essential thioredoxin-dependent peroxiredoxin system from Helicobacter pylori: genetic and kinetic characterization.</title>
        <authorList>
            <person name="Baker L.M."/>
            <person name="Raudonikiene A."/>
            <person name="Hoffman P.S."/>
            <person name="Poole L.B."/>
        </authorList>
    </citation>
    <scope>REDUCTION BY THIOREDOXIN</scope>
</reference>
<reference key="4">
    <citation type="journal article" date="2005" name="Biochim. Biophys. Acta">
        <title>Crystal structure of alkyl hydroperoxide-reductase (AhpC) from Helicobacter pylori.</title>
        <authorList>
            <person name="Papinutto E."/>
            <person name="Windle H.J."/>
            <person name="Cendron L."/>
            <person name="Battistutta R."/>
            <person name="Kelleher D."/>
            <person name="Zanotti G."/>
        </authorList>
    </citation>
    <scope>X-RAY CRYSTALLOGRAPHY (2.95 ANGSTROMS)</scope>
    <scope>SUBUNIT</scope>
    <scope>DISULFIDE BONDS</scope>
</reference>
<sequence length="198" mass="22259">MLVTKLAPDFKAPAVLGNNEVDEHFELSKNLGKNGVILFFWPKDFTFVCPTEIIAFDKRVKDFHEKGFNVIGVSIDSEQVHFAWKNTPVEKGGIGQVSFPMVADITKSISRDYDVLFEEAIALRGAFLIDKNMKVRHAVINDLPLGRNADEMLRMVDALLHFEEHGEVCPAGWRKGDKGMKATHQGVAEYLKENSIKL</sequence>
<accession>P56876</accession>
<comment type="function">
    <text evidence="1">Thiol-specific peroxidase that catalyzes the reduction of hydrogen peroxide and organic hydroperoxides to water and alcohols, respectively. Plays a role in cell protection against oxidative stress by detoxifying peroxides.</text>
</comment>
<comment type="catalytic activity">
    <reaction evidence="1">
        <text>a hydroperoxide + NADH + H(+) = an alcohol + NAD(+) + H2O</text>
        <dbReference type="Rhea" id="RHEA:62628"/>
        <dbReference type="ChEBI" id="CHEBI:15377"/>
        <dbReference type="ChEBI" id="CHEBI:15378"/>
        <dbReference type="ChEBI" id="CHEBI:30879"/>
        <dbReference type="ChEBI" id="CHEBI:35924"/>
        <dbReference type="ChEBI" id="CHEBI:57540"/>
        <dbReference type="ChEBI" id="CHEBI:57945"/>
        <dbReference type="EC" id="1.11.1.26"/>
    </reaction>
</comment>
<comment type="subunit">
    <text evidence="5">Homodimer; disulfide-linked, upon oxidation. 5 homodimers assemble to form a ring-like decamer (PubMed:16213196).</text>
</comment>
<comment type="subcellular location">
    <subcellularLocation>
        <location evidence="2">Cytoplasm</location>
    </subcellularLocation>
</comment>
<comment type="miscellaneous">
    <text evidence="4 5">The active site is a conserved redox-active cysteine residue, the peroxidatic cysteine (C(P)), which makes the nucleophilic attack on the peroxide substrate. The peroxide oxidizes the C(P)-SH to cysteine sulfenic acid (C(P)-SOH), which then reacts with another cysteine residue, the resolving cysteine (C(R)), to form a disulfide bridge. The disulfide is subsequently reduced by an appropriate electron donor to complete the catalytic cycle. In this typical 2-Cys peroxiredoxin, C(R) is provided by the other dimeric subunit to form an intersubunit disulfide (PubMed:16213196). The disulfide is subsequently reduced by thioredoxin (PubMed:11222594).</text>
</comment>
<comment type="similarity">
    <text evidence="6">Belongs to the peroxiredoxin family. AhpC/Prx1 subfamily.</text>
</comment>